<organism>
    <name type="scientific">Francisella tularensis subsp. holarctica (strain LVS)</name>
    <dbReference type="NCBI Taxonomy" id="376619"/>
    <lineage>
        <taxon>Bacteria</taxon>
        <taxon>Pseudomonadati</taxon>
        <taxon>Pseudomonadota</taxon>
        <taxon>Gammaproteobacteria</taxon>
        <taxon>Thiotrichales</taxon>
        <taxon>Francisellaceae</taxon>
        <taxon>Francisella</taxon>
    </lineage>
</organism>
<protein>
    <recommendedName>
        <fullName evidence="1">Small ribosomal subunit protein bS21B</fullName>
    </recommendedName>
    <alternativeName>
        <fullName evidence="2">30S ribosomal protein S21 2</fullName>
    </alternativeName>
</protein>
<comment type="similarity">
    <text evidence="1">Belongs to the bacterial ribosomal protein bS21 family.</text>
</comment>
<sequence length="65" mass="7840">MPSVRIKEREPFDVALRRFKRSCEKAGIVSELRRREYFEKPTWARKRKKTAAVKRAHKSNIIVKR</sequence>
<reference key="1">
    <citation type="submission" date="2006-03" db="EMBL/GenBank/DDBJ databases">
        <title>Complete genome sequence of Francisella tularensis LVS (Live Vaccine Strain).</title>
        <authorList>
            <person name="Chain P."/>
            <person name="Larimer F."/>
            <person name="Land M."/>
            <person name="Stilwagen S."/>
            <person name="Larsson P."/>
            <person name="Bearden S."/>
            <person name="Chu M."/>
            <person name="Oyston P."/>
            <person name="Forsman M."/>
            <person name="Andersson S."/>
            <person name="Lindler L."/>
            <person name="Titball R."/>
            <person name="Garcia E."/>
        </authorList>
    </citation>
    <scope>NUCLEOTIDE SEQUENCE [LARGE SCALE GENOMIC DNA]</scope>
    <source>
        <strain>LVS</strain>
    </source>
</reference>
<accession>Q2A3F5</accession>
<proteinExistence type="inferred from homology"/>
<keyword id="KW-1185">Reference proteome</keyword>
<keyword id="KW-0687">Ribonucleoprotein</keyword>
<keyword id="KW-0689">Ribosomal protein</keyword>
<gene>
    <name evidence="1" type="primary">rpsU2</name>
    <name type="ordered locus">FTL_1047</name>
</gene>
<evidence type="ECO:0000255" key="1">
    <source>
        <dbReference type="HAMAP-Rule" id="MF_00358"/>
    </source>
</evidence>
<evidence type="ECO:0000305" key="2"/>
<name>RS212_FRATH</name>
<dbReference type="EMBL" id="AM233362">
    <property type="protein sequence ID" value="CAJ79486.1"/>
    <property type="molecule type" value="Genomic_DNA"/>
</dbReference>
<dbReference type="SMR" id="Q2A3F5"/>
<dbReference type="KEGG" id="ftl:FTL_1047"/>
<dbReference type="Proteomes" id="UP000001944">
    <property type="component" value="Chromosome"/>
</dbReference>
<dbReference type="GO" id="GO:1990904">
    <property type="term" value="C:ribonucleoprotein complex"/>
    <property type="evidence" value="ECO:0007669"/>
    <property type="project" value="UniProtKB-KW"/>
</dbReference>
<dbReference type="GO" id="GO:0005840">
    <property type="term" value="C:ribosome"/>
    <property type="evidence" value="ECO:0007669"/>
    <property type="project" value="UniProtKB-KW"/>
</dbReference>
<dbReference type="GO" id="GO:0003735">
    <property type="term" value="F:structural constituent of ribosome"/>
    <property type="evidence" value="ECO:0007669"/>
    <property type="project" value="InterPro"/>
</dbReference>
<dbReference type="GO" id="GO:0006412">
    <property type="term" value="P:translation"/>
    <property type="evidence" value="ECO:0007669"/>
    <property type="project" value="UniProtKB-UniRule"/>
</dbReference>
<dbReference type="Gene3D" id="1.20.5.1150">
    <property type="entry name" value="Ribosomal protein S8"/>
    <property type="match status" value="1"/>
</dbReference>
<dbReference type="HAMAP" id="MF_00358">
    <property type="entry name" value="Ribosomal_bS21"/>
    <property type="match status" value="1"/>
</dbReference>
<dbReference type="InterPro" id="IPR001911">
    <property type="entry name" value="Ribosomal_bS21"/>
</dbReference>
<dbReference type="InterPro" id="IPR018278">
    <property type="entry name" value="Ribosomal_bS21_CS"/>
</dbReference>
<dbReference type="InterPro" id="IPR038380">
    <property type="entry name" value="Ribosomal_bS21_sf"/>
</dbReference>
<dbReference type="NCBIfam" id="TIGR00030">
    <property type="entry name" value="S21p"/>
    <property type="match status" value="1"/>
</dbReference>
<dbReference type="PANTHER" id="PTHR21109">
    <property type="entry name" value="MITOCHONDRIAL 28S RIBOSOMAL PROTEIN S21"/>
    <property type="match status" value="1"/>
</dbReference>
<dbReference type="PANTHER" id="PTHR21109:SF22">
    <property type="entry name" value="SMALL RIBOSOMAL SUBUNIT PROTEIN BS21"/>
    <property type="match status" value="1"/>
</dbReference>
<dbReference type="Pfam" id="PF01165">
    <property type="entry name" value="Ribosomal_S21"/>
    <property type="match status" value="1"/>
</dbReference>
<dbReference type="PRINTS" id="PR00976">
    <property type="entry name" value="RIBOSOMALS21"/>
</dbReference>
<dbReference type="PROSITE" id="PS01181">
    <property type="entry name" value="RIBOSOMAL_S21"/>
    <property type="match status" value="1"/>
</dbReference>
<feature type="chain" id="PRO_0000266669" description="Small ribosomal subunit protein bS21B">
    <location>
        <begin position="1"/>
        <end position="65"/>
    </location>
</feature>